<name>TYSY_XANAC</name>
<reference key="1">
    <citation type="journal article" date="2002" name="Nature">
        <title>Comparison of the genomes of two Xanthomonas pathogens with differing host specificities.</title>
        <authorList>
            <person name="da Silva A.C.R."/>
            <person name="Ferro J.A."/>
            <person name="Reinach F.C."/>
            <person name="Farah C.S."/>
            <person name="Furlan L.R."/>
            <person name="Quaggio R.B."/>
            <person name="Monteiro-Vitorello C.B."/>
            <person name="Van Sluys M.A."/>
            <person name="Almeida N.F. Jr."/>
            <person name="Alves L.M.C."/>
            <person name="do Amaral A.M."/>
            <person name="Bertolini M.C."/>
            <person name="Camargo L.E.A."/>
            <person name="Camarotte G."/>
            <person name="Cannavan F."/>
            <person name="Cardozo J."/>
            <person name="Chambergo F."/>
            <person name="Ciapina L.P."/>
            <person name="Cicarelli R.M.B."/>
            <person name="Coutinho L.L."/>
            <person name="Cursino-Santos J.R."/>
            <person name="El-Dorry H."/>
            <person name="Faria J.B."/>
            <person name="Ferreira A.J.S."/>
            <person name="Ferreira R.C.C."/>
            <person name="Ferro M.I.T."/>
            <person name="Formighieri E.F."/>
            <person name="Franco M.C."/>
            <person name="Greggio C.C."/>
            <person name="Gruber A."/>
            <person name="Katsuyama A.M."/>
            <person name="Kishi L.T."/>
            <person name="Leite R.P."/>
            <person name="Lemos E.G.M."/>
            <person name="Lemos M.V.F."/>
            <person name="Locali E.C."/>
            <person name="Machado M.A."/>
            <person name="Madeira A.M.B.N."/>
            <person name="Martinez-Rossi N.M."/>
            <person name="Martins E.C."/>
            <person name="Meidanis J."/>
            <person name="Menck C.F.M."/>
            <person name="Miyaki C.Y."/>
            <person name="Moon D.H."/>
            <person name="Moreira L.M."/>
            <person name="Novo M.T.M."/>
            <person name="Okura V.K."/>
            <person name="Oliveira M.C."/>
            <person name="Oliveira V.R."/>
            <person name="Pereira H.A."/>
            <person name="Rossi A."/>
            <person name="Sena J.A.D."/>
            <person name="Silva C."/>
            <person name="de Souza R.F."/>
            <person name="Spinola L.A.F."/>
            <person name="Takita M.A."/>
            <person name="Tamura R.E."/>
            <person name="Teixeira E.C."/>
            <person name="Tezza R.I.D."/>
            <person name="Trindade dos Santos M."/>
            <person name="Truffi D."/>
            <person name="Tsai S.M."/>
            <person name="White F.F."/>
            <person name="Setubal J.C."/>
            <person name="Kitajima J.P."/>
        </authorList>
    </citation>
    <scope>NUCLEOTIDE SEQUENCE [LARGE SCALE GENOMIC DNA]</scope>
    <source>
        <strain>306</strain>
    </source>
</reference>
<evidence type="ECO:0000255" key="1">
    <source>
        <dbReference type="HAMAP-Rule" id="MF_00008"/>
    </source>
</evidence>
<sequence>MKPYLELLQHVLDHGAEKSDRTGTGTRSVFGWQMRFDLNDGFPLVTTKKLHLRSIIHELLWFLKGDTNIGYLSDHQVRIWDEWADDNGDLGPVYGKQWRRWTGPDGVEIDQMQWLVDEIKRNPDSRRLVISAWNVGELPQMALMPCHSLFQFYVVNGKLSCQLYQRSGDIFLGVPFNIASYALLTHMVAQATGLGVGDFVHTLGDAHLYSNHFEQAREQLTRTPRALPSLRLNPEVTDLFAFRFEDIAIEGYDPHPAIKAPVAV</sequence>
<keyword id="KW-0963">Cytoplasm</keyword>
<keyword id="KW-0489">Methyltransferase</keyword>
<keyword id="KW-0545">Nucleotide biosynthesis</keyword>
<keyword id="KW-0808">Transferase</keyword>
<gene>
    <name evidence="1" type="primary">thyA</name>
    <name type="ordered locus">XAC0842</name>
</gene>
<proteinExistence type="inferred from homology"/>
<feature type="chain" id="PRO_0000141045" description="Thymidylate synthase">
    <location>
        <begin position="1"/>
        <end position="264"/>
    </location>
</feature>
<feature type="active site" description="Nucleophile" evidence="1">
    <location>
        <position position="146"/>
    </location>
</feature>
<feature type="binding site" description="in other chain" evidence="1">
    <location>
        <position position="21"/>
    </location>
    <ligand>
        <name>dUMP</name>
        <dbReference type="ChEBI" id="CHEBI:246422"/>
        <note>ligand shared between dimeric partners</note>
    </ligand>
</feature>
<feature type="binding site" evidence="1">
    <location>
        <position position="51"/>
    </location>
    <ligand>
        <name>(6R)-5,10-methylene-5,6,7,8-tetrahydrofolate</name>
        <dbReference type="ChEBI" id="CHEBI:15636"/>
    </ligand>
</feature>
<feature type="binding site" evidence="1">
    <location>
        <begin position="126"/>
        <end position="127"/>
    </location>
    <ligand>
        <name>dUMP</name>
        <dbReference type="ChEBI" id="CHEBI:246422"/>
        <note>ligand shared between dimeric partners</note>
    </ligand>
</feature>
<feature type="binding site" description="in other chain" evidence="1">
    <location>
        <begin position="166"/>
        <end position="169"/>
    </location>
    <ligand>
        <name>dUMP</name>
        <dbReference type="ChEBI" id="CHEBI:246422"/>
        <note>ligand shared between dimeric partners</note>
    </ligand>
</feature>
<feature type="binding site" evidence="1">
    <location>
        <position position="169"/>
    </location>
    <ligand>
        <name>(6R)-5,10-methylene-5,6,7,8-tetrahydrofolate</name>
        <dbReference type="ChEBI" id="CHEBI:15636"/>
    </ligand>
</feature>
<feature type="binding site" description="in other chain" evidence="1">
    <location>
        <position position="177"/>
    </location>
    <ligand>
        <name>dUMP</name>
        <dbReference type="ChEBI" id="CHEBI:246422"/>
        <note>ligand shared between dimeric partners</note>
    </ligand>
</feature>
<feature type="binding site" description="in other chain" evidence="1">
    <location>
        <begin position="207"/>
        <end position="209"/>
    </location>
    <ligand>
        <name>dUMP</name>
        <dbReference type="ChEBI" id="CHEBI:246422"/>
        <note>ligand shared between dimeric partners</note>
    </ligand>
</feature>
<feature type="binding site" evidence="1">
    <location>
        <position position="263"/>
    </location>
    <ligand>
        <name>(6R)-5,10-methylene-5,6,7,8-tetrahydrofolate</name>
        <dbReference type="ChEBI" id="CHEBI:15636"/>
    </ligand>
</feature>
<accession>Q8PP46</accession>
<dbReference type="EC" id="2.1.1.45" evidence="1"/>
<dbReference type="EMBL" id="AE008923">
    <property type="protein sequence ID" value="AAM35730.1"/>
    <property type="molecule type" value="Genomic_DNA"/>
</dbReference>
<dbReference type="RefSeq" id="WP_005910703.1">
    <property type="nucleotide sequence ID" value="NC_003919.1"/>
</dbReference>
<dbReference type="SMR" id="Q8PP46"/>
<dbReference type="KEGG" id="xac:XAC0842"/>
<dbReference type="eggNOG" id="COG0207">
    <property type="taxonomic scope" value="Bacteria"/>
</dbReference>
<dbReference type="HOGENOM" id="CLU_021669_0_0_6"/>
<dbReference type="UniPathway" id="UPA00575"/>
<dbReference type="Proteomes" id="UP000000576">
    <property type="component" value="Chromosome"/>
</dbReference>
<dbReference type="GO" id="GO:0005829">
    <property type="term" value="C:cytosol"/>
    <property type="evidence" value="ECO:0007669"/>
    <property type="project" value="TreeGrafter"/>
</dbReference>
<dbReference type="GO" id="GO:0004799">
    <property type="term" value="F:thymidylate synthase activity"/>
    <property type="evidence" value="ECO:0007669"/>
    <property type="project" value="UniProtKB-UniRule"/>
</dbReference>
<dbReference type="GO" id="GO:0006231">
    <property type="term" value="P:dTMP biosynthetic process"/>
    <property type="evidence" value="ECO:0007669"/>
    <property type="project" value="UniProtKB-UniRule"/>
</dbReference>
<dbReference type="GO" id="GO:0006235">
    <property type="term" value="P:dTTP biosynthetic process"/>
    <property type="evidence" value="ECO:0007669"/>
    <property type="project" value="UniProtKB-UniRule"/>
</dbReference>
<dbReference type="GO" id="GO:0032259">
    <property type="term" value="P:methylation"/>
    <property type="evidence" value="ECO:0007669"/>
    <property type="project" value="UniProtKB-KW"/>
</dbReference>
<dbReference type="CDD" id="cd00351">
    <property type="entry name" value="TS_Pyrimidine_HMase"/>
    <property type="match status" value="1"/>
</dbReference>
<dbReference type="FunFam" id="3.30.572.10:FF:000001">
    <property type="entry name" value="Thymidylate synthase"/>
    <property type="match status" value="1"/>
</dbReference>
<dbReference type="Gene3D" id="3.30.572.10">
    <property type="entry name" value="Thymidylate synthase/dCMP hydroxymethylase domain"/>
    <property type="match status" value="1"/>
</dbReference>
<dbReference type="HAMAP" id="MF_00008">
    <property type="entry name" value="Thymidy_synth_bact"/>
    <property type="match status" value="1"/>
</dbReference>
<dbReference type="InterPro" id="IPR045097">
    <property type="entry name" value="Thymidate_synth/dCMP_Mease"/>
</dbReference>
<dbReference type="InterPro" id="IPR023451">
    <property type="entry name" value="Thymidate_synth/dCMP_Mease_dom"/>
</dbReference>
<dbReference type="InterPro" id="IPR036926">
    <property type="entry name" value="Thymidate_synth/dCMP_Mease_sf"/>
</dbReference>
<dbReference type="InterPro" id="IPR000398">
    <property type="entry name" value="Thymidylate_synthase"/>
</dbReference>
<dbReference type="InterPro" id="IPR020940">
    <property type="entry name" value="Thymidylate_synthase_AS"/>
</dbReference>
<dbReference type="NCBIfam" id="NF002497">
    <property type="entry name" value="PRK01827.1-3"/>
    <property type="match status" value="1"/>
</dbReference>
<dbReference type="NCBIfam" id="NF002499">
    <property type="entry name" value="PRK01827.1-5"/>
    <property type="match status" value="1"/>
</dbReference>
<dbReference type="NCBIfam" id="TIGR03284">
    <property type="entry name" value="thym_sym"/>
    <property type="match status" value="2"/>
</dbReference>
<dbReference type="PANTHER" id="PTHR11548:SF9">
    <property type="entry name" value="THYMIDYLATE SYNTHASE"/>
    <property type="match status" value="1"/>
</dbReference>
<dbReference type="PANTHER" id="PTHR11548">
    <property type="entry name" value="THYMIDYLATE SYNTHASE 1"/>
    <property type="match status" value="1"/>
</dbReference>
<dbReference type="Pfam" id="PF00303">
    <property type="entry name" value="Thymidylat_synt"/>
    <property type="match status" value="1"/>
</dbReference>
<dbReference type="PRINTS" id="PR00108">
    <property type="entry name" value="THYMDSNTHASE"/>
</dbReference>
<dbReference type="SUPFAM" id="SSF55831">
    <property type="entry name" value="Thymidylate synthase/dCMP hydroxymethylase"/>
    <property type="match status" value="1"/>
</dbReference>
<dbReference type="PROSITE" id="PS00091">
    <property type="entry name" value="THYMIDYLATE_SYNTHASE"/>
    <property type="match status" value="1"/>
</dbReference>
<organism>
    <name type="scientific">Xanthomonas axonopodis pv. citri (strain 306)</name>
    <dbReference type="NCBI Taxonomy" id="190486"/>
    <lineage>
        <taxon>Bacteria</taxon>
        <taxon>Pseudomonadati</taxon>
        <taxon>Pseudomonadota</taxon>
        <taxon>Gammaproteobacteria</taxon>
        <taxon>Lysobacterales</taxon>
        <taxon>Lysobacteraceae</taxon>
        <taxon>Xanthomonas</taxon>
    </lineage>
</organism>
<protein>
    <recommendedName>
        <fullName evidence="1">Thymidylate synthase</fullName>
        <shortName evidence="1">TS</shortName>
        <shortName evidence="1">TSase</shortName>
        <ecNumber evidence="1">2.1.1.45</ecNumber>
    </recommendedName>
</protein>
<comment type="function">
    <text evidence="1">Catalyzes the reductive methylation of 2'-deoxyuridine-5'-monophosphate (dUMP) to 2'-deoxythymidine-5'-monophosphate (dTMP) while utilizing 5,10-methylenetetrahydrofolate (mTHF) as the methyl donor and reductant in the reaction, yielding dihydrofolate (DHF) as a by-product. This enzymatic reaction provides an intracellular de novo source of dTMP, an essential precursor for DNA biosynthesis.</text>
</comment>
<comment type="catalytic activity">
    <reaction evidence="1">
        <text>dUMP + (6R)-5,10-methylene-5,6,7,8-tetrahydrofolate = 7,8-dihydrofolate + dTMP</text>
        <dbReference type="Rhea" id="RHEA:12104"/>
        <dbReference type="ChEBI" id="CHEBI:15636"/>
        <dbReference type="ChEBI" id="CHEBI:57451"/>
        <dbReference type="ChEBI" id="CHEBI:63528"/>
        <dbReference type="ChEBI" id="CHEBI:246422"/>
        <dbReference type="EC" id="2.1.1.45"/>
    </reaction>
</comment>
<comment type="pathway">
    <text evidence="1">Pyrimidine metabolism; dTTP biosynthesis.</text>
</comment>
<comment type="subunit">
    <text evidence="1">Homodimer.</text>
</comment>
<comment type="subcellular location">
    <subcellularLocation>
        <location evidence="1">Cytoplasm</location>
    </subcellularLocation>
</comment>
<comment type="similarity">
    <text evidence="1">Belongs to the thymidylate synthase family. Bacterial-type ThyA subfamily.</text>
</comment>